<feature type="chain" id="PRO_0000268884" description="Regulator of sigma D">
    <location>
        <begin position="1"/>
        <end position="162"/>
    </location>
</feature>
<evidence type="ECO:0000255" key="1">
    <source>
        <dbReference type="HAMAP-Rule" id="MF_01181"/>
    </source>
</evidence>
<protein>
    <recommendedName>
        <fullName evidence="1">Regulator of sigma D</fullName>
    </recommendedName>
</protein>
<accession>Q57H60</accession>
<keyword id="KW-0963">Cytoplasm</keyword>
<keyword id="KW-0804">Transcription</keyword>
<keyword id="KW-0805">Transcription regulation</keyword>
<proteinExistence type="inferred from homology"/>
<gene>
    <name evidence="1" type="primary">rsd</name>
    <name type="ordered locus">SCH_4046</name>
</gene>
<reference key="1">
    <citation type="journal article" date="2005" name="Nucleic Acids Res.">
        <title>The genome sequence of Salmonella enterica serovar Choleraesuis, a highly invasive and resistant zoonotic pathogen.</title>
        <authorList>
            <person name="Chiu C.-H."/>
            <person name="Tang P."/>
            <person name="Chu C."/>
            <person name="Hu S."/>
            <person name="Bao Q."/>
            <person name="Yu J."/>
            <person name="Chou Y.-Y."/>
            <person name="Wang H.-S."/>
            <person name="Lee Y.-S."/>
        </authorList>
    </citation>
    <scope>NUCLEOTIDE SEQUENCE [LARGE SCALE GENOMIC DNA]</scope>
    <source>
        <strain>SC-B67</strain>
    </source>
</reference>
<comment type="function">
    <text evidence="1">Binds RpoD and negatively regulates RpoD-mediated transcription activation by preventing the interaction between the primary sigma factor RpoD with the catalytic core of the RNA polymerase and with promoter DNA. May be involved in replacement of the RNA polymerase sigma subunit from RpoD to RpoS during the transition from exponential growth to the stationary phase.</text>
</comment>
<comment type="subunit">
    <text evidence="1">Interacts with RpoD.</text>
</comment>
<comment type="subcellular location">
    <subcellularLocation>
        <location evidence="1">Cytoplasm</location>
    </subcellularLocation>
</comment>
<comment type="similarity">
    <text evidence="1">Belongs to the Rsd/AlgQ family.</text>
</comment>
<dbReference type="EMBL" id="AE017220">
    <property type="protein sequence ID" value="AAX67952.1"/>
    <property type="molecule type" value="Genomic_DNA"/>
</dbReference>
<dbReference type="RefSeq" id="WP_000934317.1">
    <property type="nucleotide sequence ID" value="NC_006905.1"/>
</dbReference>
<dbReference type="SMR" id="Q57H60"/>
<dbReference type="KEGG" id="sec:SCH_4046"/>
<dbReference type="HOGENOM" id="CLU_142729_0_0_6"/>
<dbReference type="Proteomes" id="UP000000538">
    <property type="component" value="Chromosome"/>
</dbReference>
<dbReference type="GO" id="GO:0005737">
    <property type="term" value="C:cytoplasm"/>
    <property type="evidence" value="ECO:0007669"/>
    <property type="project" value="UniProtKB-SubCell"/>
</dbReference>
<dbReference type="GO" id="GO:0006355">
    <property type="term" value="P:regulation of DNA-templated transcription"/>
    <property type="evidence" value="ECO:0007669"/>
    <property type="project" value="InterPro"/>
</dbReference>
<dbReference type="FunFam" id="1.20.120.1370:FF:000001">
    <property type="entry name" value="Regulator of sigma D"/>
    <property type="match status" value="1"/>
</dbReference>
<dbReference type="Gene3D" id="1.20.120.1370">
    <property type="entry name" value="Regulator of RNA polymerase sigma(70) subunit, domain 4"/>
    <property type="match status" value="1"/>
</dbReference>
<dbReference type="HAMAP" id="MF_01181">
    <property type="entry name" value="Rsd"/>
    <property type="match status" value="1"/>
</dbReference>
<dbReference type="InterPro" id="IPR038309">
    <property type="entry name" value="Rsd/AlgQ_sf"/>
</dbReference>
<dbReference type="InterPro" id="IPR023785">
    <property type="entry name" value="Sigma70_reg_Rsd"/>
</dbReference>
<dbReference type="InterPro" id="IPR007448">
    <property type="entry name" value="Sigma70_reg_Rsd_AlgQ"/>
</dbReference>
<dbReference type="NCBIfam" id="NF008723">
    <property type="entry name" value="PRK11718.1"/>
    <property type="match status" value="1"/>
</dbReference>
<dbReference type="Pfam" id="PF04353">
    <property type="entry name" value="Rsd_AlgQ"/>
    <property type="match status" value="1"/>
</dbReference>
<dbReference type="PIRSF" id="PIRSF016548">
    <property type="entry name" value="Rsd_AlgQ"/>
    <property type="match status" value="1"/>
</dbReference>
<organism>
    <name type="scientific">Salmonella choleraesuis (strain SC-B67)</name>
    <dbReference type="NCBI Taxonomy" id="321314"/>
    <lineage>
        <taxon>Bacteria</taxon>
        <taxon>Pseudomonadati</taxon>
        <taxon>Pseudomonadota</taxon>
        <taxon>Gammaproteobacteria</taxon>
        <taxon>Enterobacterales</taxon>
        <taxon>Enterobacteriaceae</taxon>
        <taxon>Salmonella</taxon>
    </lineage>
</organism>
<name>RSD_SALCH</name>
<sequence>MLNQLENLTERVGGSNKLVDRWLDVRKHLLVAYYNLVGIKPGKESYMRLNEKALDNFCQSLVDYLSAGHFSIYERILHKLEGNGQLLHAAKIWPLLEDNTQRIMDYYDTSLETAIDHDNCLEFQQALSDIGEALEARFVLEDKLIMLVFDAMHDGARVKRPA</sequence>